<proteinExistence type="evidence at protein level"/>
<reference key="1">
    <citation type="journal article" date="1986" name="Nature">
        <title>Structure of the receptor for platelet-derived growth factor helps define a family of closely related growth factor receptors.</title>
        <authorList>
            <person name="Yarden Y."/>
            <person name="Escobedo J.A."/>
            <person name="Kuang W.-J."/>
            <person name="Yang-Feng T.L."/>
            <person name="Daniel T.O."/>
            <person name="Tremble P.M."/>
            <person name="Chen E.Y."/>
            <person name="Ando M.E."/>
            <person name="Harkins R.N."/>
            <person name="Francke U."/>
            <person name="Fried V.A."/>
            <person name="Ullrich A."/>
            <person name="Williams L.T."/>
        </authorList>
    </citation>
    <scope>NUCLEOTIDE SEQUENCE [MRNA] (ISOFORM 1)</scope>
    <scope>PARTIAL PROTEIN SEQUENCE</scope>
    <source>
        <tissue>Fibroblast</tissue>
    </source>
</reference>
<reference key="2">
    <citation type="journal article" date="2009" name="PLoS Biol.">
        <title>Lineage-specific biology revealed by a finished genome assembly of the mouse.</title>
        <authorList>
            <person name="Church D.M."/>
            <person name="Goodstadt L."/>
            <person name="Hillier L.W."/>
            <person name="Zody M.C."/>
            <person name="Goldstein S."/>
            <person name="She X."/>
            <person name="Bult C.J."/>
            <person name="Agarwala R."/>
            <person name="Cherry J.L."/>
            <person name="DiCuccio M."/>
            <person name="Hlavina W."/>
            <person name="Kapustin Y."/>
            <person name="Meric P."/>
            <person name="Maglott D."/>
            <person name="Birtle Z."/>
            <person name="Marques A.C."/>
            <person name="Graves T."/>
            <person name="Zhou S."/>
            <person name="Teague B."/>
            <person name="Potamousis K."/>
            <person name="Churas C."/>
            <person name="Place M."/>
            <person name="Herschleb J."/>
            <person name="Runnheim R."/>
            <person name="Forrest D."/>
            <person name="Amos-Landgraf J."/>
            <person name="Schwartz D.C."/>
            <person name="Cheng Z."/>
            <person name="Lindblad-Toh K."/>
            <person name="Eichler E.E."/>
            <person name="Ponting C.P."/>
        </authorList>
    </citation>
    <scope>NUCLEOTIDE SEQUENCE [LARGE SCALE GENOMIC DNA]</scope>
    <source>
        <strain>C57BL/6J</strain>
    </source>
</reference>
<reference key="3">
    <citation type="journal article" date="1993" name="J. Biol. Chem.">
        <title>PDGF-AB requires PDGF receptor alpha-subunits for high-affinity, but not for low-affinity, binding and signal transduction.</title>
        <authorList>
            <person name="Seifert R.A."/>
            <person name="van Koppen A."/>
            <person name="Bowen-Pope D.F."/>
        </authorList>
    </citation>
    <scope>FUNCTION AS RECEPTOR FOR PDGFA AND PDGFB</scope>
    <scope>SUBUNIT</scope>
    <scope>AUTOPHOSPHORYLATION</scope>
</reference>
<reference key="4">
    <citation type="journal article" date="1994" name="Genes Dev.">
        <title>Abnormal kidney development and hematological disorders in PDGF beta-receptor mutant mice.</title>
        <authorList>
            <person name="Soriano P."/>
        </authorList>
    </citation>
    <scope>DISRUPTION PHENOTYPE</scope>
</reference>
<reference key="5">
    <citation type="journal article" date="1999" name="Mol. Cell. Biol.">
        <title>Grb10, a positive, stimulatory signaling adapter in platelet-derived growth factor BB-, insulin-like growth factor I-, and insulin-mediated mitogenesis.</title>
        <authorList>
            <person name="Wang J."/>
            <person name="Dai H."/>
            <person name="Yousaf N."/>
            <person name="Moussaif M."/>
            <person name="Deng Y."/>
            <person name="Boufelliga A."/>
            <person name="Swamy O.R."/>
            <person name="Leone M.E."/>
            <person name="Riedel H."/>
        </authorList>
    </citation>
    <scope>INTERACTION WITH GRB10</scope>
</reference>
<reference key="6">
    <citation type="journal article" date="2003" name="J. Am. Soc. Nephrol.">
        <title>Obstructive uropathy in mice and humans: potential role for PDGF-D in the progression of tubulointerstitial injury.</title>
        <authorList>
            <person name="Taneda S."/>
            <person name="Hudkins K.L."/>
            <person name="Topouzis S."/>
            <person name="Gilbertson D.G."/>
            <person name="Ophascharoensuk V."/>
            <person name="Truong L."/>
            <person name="Johnson R.J."/>
            <person name="Alpers C.E."/>
        </authorList>
    </citation>
    <scope>TISSUE SPECIFICITY</scope>
</reference>
<reference key="7">
    <citation type="journal article" date="2003" name="PLoS Biol.">
        <title>Additive effects of PDGF receptor beta signaling pathways in vascular smooth muscle cell development.</title>
        <authorList>
            <person name="Tallquist M.D."/>
            <person name="French W.J."/>
            <person name="Soriano P."/>
        </authorList>
    </citation>
    <scope>FUNCTION</scope>
    <scope>MUTAGENESIS OF TYR-578; TYR-715; TYR-739; TYR-750; TYR-770; TYR-1008 AND TYR-1020</scope>
</reference>
<reference key="8">
    <citation type="journal article" date="2004" name="Cytokine Growth Factor Rev.">
        <title>Insight into the physiological functions of PDGF through genetic studies in mice.</title>
        <authorList>
            <person name="Betsholtz C."/>
        </authorList>
    </citation>
    <scope>REVIEW ON FUNCTION</scope>
    <scope>DISRUPTION PHENOTYPE</scope>
</reference>
<reference key="9">
    <citation type="journal article" date="2004" name="J. Biol. Chem.">
        <title>A gain of function mutation in the activation loop of platelet-derived growth factor beta-receptor deregulates its kinase activity.</title>
        <authorList>
            <person name="Chiara F."/>
            <person name="Goumans M.J."/>
            <person name="Forsberg H."/>
            <person name="Ahgren A."/>
            <person name="Rasola A."/>
            <person name="Aspenstrom P."/>
            <person name="Wernstedt C."/>
            <person name="Hellberg C."/>
            <person name="Heldin C.H."/>
            <person name="Heuchel R."/>
        </authorList>
    </citation>
    <scope>MUTAGENESIS OF ASP-849</scope>
    <scope>CATALYTIC ACTIVITY</scope>
    <scope>FUNCTION</scope>
    <scope>INTERACTION WITH PIK3R1</scope>
</reference>
<reference key="10">
    <citation type="journal article" date="2004" name="Mol. Cell. Biol.">
        <title>Site-selective regulation of platelet-derived growth factor beta receptor tyrosine phosphorylation by T-cell protein tyrosine phosphatase.</title>
        <authorList>
            <person name="Persson C."/>
            <person name="Saevenhed C."/>
            <person name="Bourdeau A."/>
            <person name="Tremblay M.L."/>
            <person name="Markova B."/>
            <person name="Boehmer F.D."/>
            <person name="Haj F.G."/>
            <person name="Neel B.G."/>
            <person name="Elson A."/>
            <person name="Heldin C.H."/>
            <person name="Roennstrand L."/>
            <person name="Ostman A."/>
            <person name="Hellberg C."/>
        </authorList>
    </citation>
    <scope>PHOSPHORYLATION</scope>
    <scope>DEPHOSPHORYLATION BY PTPN2</scope>
</reference>
<reference key="11">
    <citation type="journal article" date="2004" name="Mol. Cell. Biol.">
        <title>Bidirectional signaling links the Abelson kinases to the platelet-derived growth factor receptor.</title>
        <authorList>
            <person name="Plattner R."/>
            <person name="Koleske A.J."/>
            <person name="Kazlauskas A."/>
            <person name="Pendergast A.M."/>
        </authorList>
    </citation>
    <scope>FUNCTION</scope>
    <scope>PHOSPHORYLATION AT TYR-685; TYR-933 AND TYR-969</scope>
</reference>
<reference key="12">
    <citation type="journal article" date="2005" name="J. Biol. Chem.">
        <title>Low density lipoprotein receptor-related protein 1 (LRP1) controls endocytosis and c-CBL-mediated ubiquitination of the platelet-derived growth factor receptor beta (PDGFR beta).</title>
        <authorList>
            <person name="Takayama Y."/>
            <person name="May P."/>
            <person name="Anderson R.G."/>
            <person name="Herz J."/>
        </authorList>
    </citation>
    <scope>INTERACTION WITH CBL</scope>
    <scope>UBIQUITINATION</scope>
</reference>
<reference key="13">
    <citation type="journal article" date="2007" name="J. Biol. Chem.">
        <title>Binding of Cbl to a phospholipase Cgamma1-docking site on platelet-derived growth factor receptor beta provides a dual mechanism of negative regulation.</title>
        <authorList>
            <person name="Reddi A.L."/>
            <person name="Ying G."/>
            <person name="Duan L."/>
            <person name="Chen G."/>
            <person name="Dimri M."/>
            <person name="Douillard P."/>
            <person name="Druker B.J."/>
            <person name="Naramura M."/>
            <person name="Band V."/>
            <person name="Band H."/>
        </authorList>
    </citation>
    <scope>INTERACTION WITH CBL AND PLCG1</scope>
    <scope>FUNCTION</scope>
</reference>
<reference key="14">
    <citation type="journal article" date="2008" name="Circ. Res.">
        <title>Platelet-derived growth factor receptor beta signaling is required for efficient epicardial cell migration and development of two distinct coronary vascular smooth muscle cell populations.</title>
        <authorList>
            <person name="Mellgren A.M."/>
            <person name="Smith C.L."/>
            <person name="Olsen G.S."/>
            <person name="Eskiocak B."/>
            <person name="Zhou B."/>
            <person name="Kazi M.N."/>
            <person name="Ruiz F.R."/>
            <person name="Pu W.T."/>
            <person name="Tallquist M.D."/>
        </authorList>
    </citation>
    <scope>FUNCTION</scope>
</reference>
<reference key="15">
    <citation type="journal article" date="2008" name="Dev. Dyn.">
        <title>PDGF-B signaling is important for murine cardiac development: its role in developing atrioventricular valves, coronaries, and cardiac innervation.</title>
        <authorList>
            <person name="Van den Akker N.M."/>
            <person name="Winkel L.C."/>
            <person name="Nisancioglu M.H."/>
            <person name="Maas S."/>
            <person name="Wisse L.J."/>
            <person name="Armulik A."/>
            <person name="Poelmann R.E."/>
            <person name="Lie-Venema H."/>
            <person name="Betsholtz C."/>
            <person name="Gittenberger-de Groot A.C."/>
        </authorList>
    </citation>
    <scope>DISRUPTION PHENOTYPE</scope>
</reference>
<reference key="16">
    <citation type="journal article" date="2008" name="PLoS ONE">
        <title>Comprehensive dissection of PDGF-PDGFR signaling pathways in PDGFR genetically defined cells.</title>
        <authorList>
            <person name="Wu E."/>
            <person name="Palmer N."/>
            <person name="Tian Z."/>
            <person name="Moseman A.P."/>
            <person name="Galdzicki M."/>
            <person name="Wang X."/>
            <person name="Berger B."/>
            <person name="Zhang H."/>
            <person name="Kohane I.S."/>
        </authorList>
    </citation>
    <scope>FUNCTION</scope>
</reference>
<reference key="17">
    <citation type="journal article" date="2009" name="Mol. Cell. Proteomics">
        <title>The mouse C2C12 myoblast cell surface N-linked glycoproteome: identification, glycosite occupancy, and membrane orientation.</title>
        <authorList>
            <person name="Gundry R.L."/>
            <person name="Raginski K."/>
            <person name="Tarasova Y."/>
            <person name="Tchernyshyov I."/>
            <person name="Bausch-Fluck D."/>
            <person name="Elliott S.T."/>
            <person name="Boheler K.R."/>
            <person name="Van Eyk J.E."/>
            <person name="Wollscheid B."/>
        </authorList>
    </citation>
    <scope>GLYCOSYLATION [LARGE SCALE ANALYSIS] AT ASN-306; ASN-467 AND ASN-478</scope>
    <source>
        <tissue>Myoblast</tissue>
    </source>
</reference>
<reference key="18">
    <citation type="journal article" date="2009" name="PLoS ONE">
        <title>LRP1 regulates architecture of the vascular wall by controlling PDGFRbeta-dependent phosphatidylinositol 3-kinase activation.</title>
        <authorList>
            <person name="Zhou L."/>
            <person name="Takayama Y."/>
            <person name="Boucher P."/>
            <person name="Tallquist M.D."/>
            <person name="Herz J."/>
        </authorList>
    </citation>
    <scope>FUNCTION</scope>
    <scope>INTERACTION WITH PIK3R1</scope>
</reference>
<reference key="19">
    <citation type="journal article" date="2010" name="Cell">
        <title>A tissue-specific atlas of mouse protein phosphorylation and expression.</title>
        <authorList>
            <person name="Huttlin E.L."/>
            <person name="Jedrychowski M.P."/>
            <person name="Elias J.E."/>
            <person name="Goswami T."/>
            <person name="Rad R."/>
            <person name="Beausoleil S.A."/>
            <person name="Villen J."/>
            <person name="Haas W."/>
            <person name="Sowa M.E."/>
            <person name="Gygi S.P."/>
        </authorList>
    </citation>
    <scope>IDENTIFICATION BY MASS SPECTROMETRY [LARGE SCALE ANALYSIS]</scope>
    <source>
        <tissue>Brain</tissue>
        <tissue>Brown adipose tissue</tissue>
        <tissue>Heart</tissue>
        <tissue>Kidney</tissue>
        <tissue>Lung</tissue>
        <tissue>Spleen</tissue>
    </source>
</reference>
<reference key="20">
    <citation type="journal article" date="2011" name="Dev. Cell">
        <title>PDGFRbeta signaling regulates mural cell plasticity and inhibits fat development.</title>
        <authorList>
            <person name="Olson L.E."/>
            <person name="Soriano P."/>
        </authorList>
    </citation>
    <scope>FUNCTION</scope>
</reference>
<reference key="21">
    <citation type="journal article" date="1994" name="Structure">
        <title>Crystal structures of peptide complexes of the amino-terminal SH2 domain of the Syp tyrosine phosphatase.</title>
        <authorList>
            <person name="Lee C.-H."/>
            <person name="Kominos D."/>
            <person name="Jacques S."/>
            <person name="Margolis B."/>
            <person name="Schlessinger J."/>
            <person name="Shoelson S.E."/>
            <person name="Kuriyan J."/>
        </authorList>
    </citation>
    <scope>X-RAY CRYSTALLOGRAPHY (2.05 ANGSTROMS) OF 1005-1015 IN COMPLEX WITH PTPN11</scope>
    <scope>INTERACTION WITH PTPN11</scope>
</reference>
<comment type="function">
    <text evidence="1 9 10 12 14 16 17 19 20 22">Tyrosine-protein kinase that acts as a cell-surface receptor for homodimeric PDGFB and PDGFD and for heterodimers formed by PDGFA and PDGFB, and plays an essential role in the regulation of embryonic development, cell proliferation, survival, differentiation, chemotaxis and migration. Plays an essential role in blood vessel development by promoting proliferation, migration and recruitment of pericytes and smooth muscle cells to endothelial cells. Plays a role in the migration of vascular smooth muscle cells and the formation of neointima at vascular injury sites. Required for normal development of the cardiovascular system. Required for normal recruitment of pericytes (mesangial cells) in the kidney glomerulus, and for normal formation of a branched network of capillaries in kidney glomeruli. Promotes rearrangement of the actin cytoskeleton and the formation of membrane ruffles. Binding of its cognate ligands - homodimeric PDGFB, heterodimers formed by PDGFA and PDGFB or homodimeric PDGFD -leads to the activation of several signaling cascades; the response depends on the nature of the bound ligand and is modulated by the formation of heterodimers between PDGFRA and PDGFRB. Phosphorylates PLCG1, PIK3R1, PTPN11, RASA1/GAP, CBL, SHC1 and NCK1. Activation of PLCG1 leads to the production of the cellular signaling molecules diacylglycerol and inositol 1,4,5-trisphosphate, mobilization of cytosolic Ca(2+) and the activation of protein kinase C. Phosphorylation of PIK3R1, the regulatory subunit of phosphatidylinositol 3-kinase, leads to the activation of the AKT1 signaling pathway. Phosphorylation of SHC1, or of the C-terminus of PTPN11, creates a binding site for GRB2, resulting in the activation of HRAS, RAF1 and down-stream MAP kinases, including MAPK1/ERK2 and/or MAPK3/ERK1. Promotes phosphorylation and activation of SRC family kinases. Promotes phosphorylation of PDCD6IP/ALIX and STAM (By similarity). Receptor signaling is down-regulated by protein phosphatases that dephosphorylate the receptor and its down-stream effectors, and by rapid internalization of the activated receptor.</text>
</comment>
<comment type="catalytic activity">
    <reaction evidence="6 12">
        <text>L-tyrosyl-[protein] + ATP = O-phospho-L-tyrosyl-[protein] + ADP + H(+)</text>
        <dbReference type="Rhea" id="RHEA:10596"/>
        <dbReference type="Rhea" id="RHEA-COMP:10136"/>
        <dbReference type="Rhea" id="RHEA-COMP:20101"/>
        <dbReference type="ChEBI" id="CHEBI:15378"/>
        <dbReference type="ChEBI" id="CHEBI:30616"/>
        <dbReference type="ChEBI" id="CHEBI:46858"/>
        <dbReference type="ChEBI" id="CHEBI:61978"/>
        <dbReference type="ChEBI" id="CHEBI:456216"/>
        <dbReference type="EC" id="2.7.10.1"/>
    </reaction>
</comment>
<comment type="activity regulation">
    <text>Present in an inactive conformation in the absence of bound ligand. Binding of PDGFB and/or PDGFD leads to dimerization and activation by autophosphorylation on tyrosine residues.</text>
</comment>
<comment type="subunit">
    <text evidence="1">Interacts with homodimeric PDGFB and PDGFD, and with heterodimers formed by PDGFA and PDGFB. May also interact with homodimeric PDGFC. Monomer in the absence of bound ligand. Interaction with homodimeric PDGFB, heterodimers formed by PDGFA and PDGFB or homodimeric PDGFD, leads to receptor dimerization, where both PDGFRA homodimers and heterodimers with PDGFRB are observed. Interacts with SH2B2/APS. Interacts directly (tyrosine phosphorylated) with SHB. Interacts (tyrosine phosphorylated) with PIK3R1 and RASA1. Interacts (tyrosine phosphorylated) with CBL. Interacts (tyrosine phosphorylated) with SRC and SRC family kinases. Interacts (tyrosine phosphorylated) with PIK3C2B, maybe indirectly. Interacts (tyrosine phosphorylated) with SHC1, GRB7, GRB10 and NCK1. Interaction with GRB2 is mediated by SHC1. Interacts (via C-terminus) with NHERF1 (By similarity).</text>
</comment>
<comment type="interaction">
    <interactant intactId="EBI-1554855">
        <id>P05622</id>
    </interactant>
    <interactant intactId="EBI-524514">
        <id>P39688</id>
        <label>Fyn</label>
    </interactant>
    <organismsDiffer>false</organismsDiffer>
    <experiments>3</experiments>
</comment>
<comment type="interaction">
    <interactant intactId="EBI-1554855">
        <id>P05622</id>
    </interactant>
    <interactant intactId="EBI-538451">
        <id>Q9JHL1</id>
        <label>Nherf2</label>
    </interactant>
    <organismsDiffer>false</organismsDiffer>
    <experiments>2</experiments>
</comment>
<comment type="interaction">
    <interactant intactId="EBI-1554855">
        <id>P05622</id>
    </interactant>
    <interactant intactId="EBI-642417">
        <id>Q91YD9</id>
        <label>Wasl</label>
    </interactant>
    <organismsDiffer>false</organismsDiffer>
    <experiments>2</experiments>
</comment>
<comment type="interaction">
    <interactant intactId="EBI-1554855">
        <id>P05622</id>
    </interactant>
    <interactant intactId="EBI-15646370">
        <id>C5IAU5</id>
        <label>E5</label>
    </interactant>
    <organismsDiffer>true</organismsDiffer>
    <experiments>2</experiments>
</comment>
<comment type="interaction">
    <interactant intactId="EBI-1554855">
        <id>P05622</id>
    </interactant>
    <interactant intactId="EBI-968788">
        <id>P18031</id>
        <label>PTPN1</label>
    </interactant>
    <organismsDiffer>true</organismsDiffer>
    <experiments>3</experiments>
</comment>
<comment type="subcellular location">
    <subcellularLocation>
        <location>Cell membrane</location>
        <topology>Single-pass type I membrane protein</topology>
    </subcellularLocation>
    <subcellularLocation>
        <location evidence="1">Cytoplasmic vesicle</location>
    </subcellularLocation>
    <subcellularLocation>
        <location evidence="1">Lysosome lumen</location>
    </subcellularLocation>
    <text>After ligand binding, the autophosphorylated receptor is ubiquitinated and internalized, leading to its degradation.</text>
</comment>
<comment type="alternative products">
    <event type="alternative splicing"/>
    <isoform>
        <id>P05622-1</id>
        <name>1</name>
        <sequence type="displayed"/>
    </isoform>
    <isoform>
        <id>P05622-2</id>
        <name>2</name>
        <sequence type="described" ref="VSP_060195"/>
    </isoform>
</comment>
<comment type="tissue specificity">
    <text evidence="8">Weakly expressed in glomerular mesangial cells and interstitial cells. Up-regulated in areas of renal fibrosis. In mice with unilateral ureteral obstruction, increased expression in interstitial cells at day 4 and expression is markedly elevated at day 7 and is maximal at day 14.</text>
</comment>
<comment type="PTM">
    <text evidence="1">Autophosphorylated on tyrosine residues upon ligand binding. Autophosphorylation occurs in trans, i.e. one subunit of the dimeric receptor phosphorylates tyrosine residues on the other subunit. Phosphorylation at Tyr-578, and to a lesser degree, Tyr-580 is important for interaction with SRC. Phosphorylation at Tyr-715 is important for interaction with GRB2. Phosphorylation at Tyr-739 and Tyr-750 is important for interaction with PIK3R1. Phosphorylation at Tyr-750 is important for interaction with NCK1. Phosphorylation at Tyr-770 and Tyr-856 is important for interaction with RASA1/GAP. Phosphorylation at Tyr-856 is important for efficient phosphorylation of PLCG1 and PTPN11, resulting in increased phosphorylation of AKT1, MAPK1/ERK2 and/or MAPK3/ERK1, PDCD6IP/ALIX and STAM, and in increased cell proliferation. Phosphorylation at Tyr-1008 is important for interaction with PTPN11. Phosphorylation at Tyr-1008 and Tyr-1020 is important for interaction with PLCG1. Dephosphorylated by PTPRJ at Tyr-750, Tyr-856, Tyr-1008 and Tyr-1020 (By similarity). Dephosphorylated by PTPN2 at Tyr-578 and Tyr-1020.</text>
</comment>
<comment type="PTM">
    <text evidence="1">N-glycosylated.</text>
</comment>
<comment type="PTM">
    <text evidence="13">Ubiquitinated. After autophosphorylation, the receptor is polyubiquitinated, leading to its degradation.</text>
</comment>
<comment type="disruption phenotype">
    <text evidence="11 15 21">No apparent phenotype up to 16 dpc. Lethality late during gestation or at birth, due to widespread bleedings. This is due to a severe shortage of vascular smooth muscle cells and pericytes, especially in the central nervous system, skin, lung and heart. Mutants suffer from hemorrhages, anemia, thrombocytopenia, and show defects in the formation of kidney glomeruli, due to a lack of mesangial cells.</text>
</comment>
<comment type="similarity">
    <text evidence="5">Belongs to the protein kinase superfamily. Tyr protein kinase family. CSF-1/PDGF receptor subfamily.</text>
</comment>
<protein>
    <recommendedName>
        <fullName>Platelet-derived growth factor receptor beta</fullName>
        <shortName>PDGF-R-beta</shortName>
        <shortName>PDGFR-beta</shortName>
        <ecNumber>2.7.10.1</ecNumber>
    </recommendedName>
    <alternativeName>
        <fullName>Beta platelet-derived growth factor receptor</fullName>
    </alternativeName>
    <alternativeName>
        <fullName>Beta-type platelet-derived growth factor receptor</fullName>
    </alternativeName>
    <alternativeName>
        <fullName>CD140 antigen-like family member B</fullName>
    </alternativeName>
    <alternativeName>
        <fullName>Platelet-derived growth factor receptor 1</fullName>
        <shortName>PDGFR-1</shortName>
    </alternativeName>
    <cdAntigenName>CD140b</cdAntigenName>
</protein>
<name>PGFRB_MOUSE</name>
<evidence type="ECO:0000250" key="1"/>
<evidence type="ECO:0000250" key="2">
    <source>
        <dbReference type="UniProtKB" id="P09619"/>
    </source>
</evidence>
<evidence type="ECO:0000255" key="3"/>
<evidence type="ECO:0000255" key="4">
    <source>
        <dbReference type="PROSITE-ProRule" id="PRU00114"/>
    </source>
</evidence>
<evidence type="ECO:0000255" key="5">
    <source>
        <dbReference type="PROSITE-ProRule" id="PRU00159"/>
    </source>
</evidence>
<evidence type="ECO:0000255" key="6">
    <source>
        <dbReference type="PROSITE-ProRule" id="PRU10028"/>
    </source>
</evidence>
<evidence type="ECO:0000256" key="7">
    <source>
        <dbReference type="SAM" id="MobiDB-lite"/>
    </source>
</evidence>
<evidence type="ECO:0000269" key="8">
    <source>
    </source>
</evidence>
<evidence type="ECO:0000269" key="9">
    <source>
    </source>
</evidence>
<evidence type="ECO:0000269" key="10">
    <source>
    </source>
</evidence>
<evidence type="ECO:0000269" key="11">
    <source>
    </source>
</evidence>
<evidence type="ECO:0000269" key="12">
    <source>
    </source>
</evidence>
<evidence type="ECO:0000269" key="13">
    <source>
    </source>
</evidence>
<evidence type="ECO:0000269" key="14">
    <source>
    </source>
</evidence>
<evidence type="ECO:0000269" key="15">
    <source>
    </source>
</evidence>
<evidence type="ECO:0000269" key="16">
    <source>
    </source>
</evidence>
<evidence type="ECO:0000269" key="17">
    <source>
    </source>
</evidence>
<evidence type="ECO:0000269" key="18">
    <source>
    </source>
</evidence>
<evidence type="ECO:0000269" key="19">
    <source>
    </source>
</evidence>
<evidence type="ECO:0000269" key="20">
    <source>
    </source>
</evidence>
<evidence type="ECO:0000269" key="21">
    <source>
    </source>
</evidence>
<evidence type="ECO:0000269" key="22">
    <source>
    </source>
</evidence>
<evidence type="ECO:0000305" key="23"/>
<organism>
    <name type="scientific">Mus musculus</name>
    <name type="common">Mouse</name>
    <dbReference type="NCBI Taxonomy" id="10090"/>
    <lineage>
        <taxon>Eukaryota</taxon>
        <taxon>Metazoa</taxon>
        <taxon>Chordata</taxon>
        <taxon>Craniata</taxon>
        <taxon>Vertebrata</taxon>
        <taxon>Euteleostomi</taxon>
        <taxon>Mammalia</taxon>
        <taxon>Eutheria</taxon>
        <taxon>Euarchontoglires</taxon>
        <taxon>Glires</taxon>
        <taxon>Rodentia</taxon>
        <taxon>Myomorpha</taxon>
        <taxon>Muroidea</taxon>
        <taxon>Muridae</taxon>
        <taxon>Murinae</taxon>
        <taxon>Mus</taxon>
        <taxon>Mus</taxon>
    </lineage>
</organism>
<gene>
    <name type="primary">Pdgfrb</name>
    <name type="synonym">Pdgfr</name>
    <name type="synonym">Pdgfr1</name>
</gene>
<keyword id="KW-0002">3D-structure</keyword>
<keyword id="KW-0025">Alternative splicing</keyword>
<keyword id="KW-0067">ATP-binding</keyword>
<keyword id="KW-1003">Cell membrane</keyword>
<keyword id="KW-0145">Chemotaxis</keyword>
<keyword id="KW-0968">Cytoplasmic vesicle</keyword>
<keyword id="KW-0217">Developmental protein</keyword>
<keyword id="KW-0903">Direct protein sequencing</keyword>
<keyword id="KW-1015">Disulfide bond</keyword>
<keyword id="KW-0325">Glycoprotein</keyword>
<keyword id="KW-0393">Immunoglobulin domain</keyword>
<keyword id="KW-0418">Kinase</keyword>
<keyword id="KW-0458">Lysosome</keyword>
<keyword id="KW-0472">Membrane</keyword>
<keyword id="KW-0547">Nucleotide-binding</keyword>
<keyword id="KW-0597">Phosphoprotein</keyword>
<keyword id="KW-0675">Receptor</keyword>
<keyword id="KW-1185">Reference proteome</keyword>
<keyword id="KW-0677">Repeat</keyword>
<keyword id="KW-0732">Signal</keyword>
<keyword id="KW-0808">Transferase</keyword>
<keyword id="KW-0812">Transmembrane</keyword>
<keyword id="KW-1133">Transmembrane helix</keyword>
<keyword id="KW-0829">Tyrosine-protein kinase</keyword>
<keyword id="KW-0832">Ubl conjugation</keyword>
<accession>P05622</accession>
<accession>E9QPE2</accession>
<sequence>MGLPGVIPALVLRGQLLLSVLWLLGPQTSRGLVITPPGPEFVLNISSTFVLTCSGSAPVMWEQMSQVPWQEAAMNQDGTFSSVLTLTNVTGGDTGEYFCVYNNSLGPELSERKRIYIFVPDPTMGFLPMDSEDLFIFVTDVTETTIPCRVTDPQLEVTLHEKKVDIPLHVPYDHQRGFTGTFEDKTYICKTTIGDREVDSDTYYVYSLQVSSINVSVNAVQTVVRQGESITIRCIVMGNDVVNFQWTYPRMKSGRLVEPVTDYLFGVPSRIGSILHIPTAELSDSGTYTCNVSVSVNDHGDEKAINISVIENGYVRLLETLGDVEIAELHRSRTLRVVFEAYPMPSVLWLKDNRTLGDSGAGELVLSTRNMSETRYVSELILVRVKVSEAGYYTMRAFHEDDEVQLSFKLQVNVPVRVLELSESHPANGEQTIRCRGRGMPQPNVTWSTCRDLKRCPRKLSPTPLGNSSKEESQLETNVTFWEEDQEYEVVSTLRLRHVDQPLSVRCMLQNSMGGDSQEVTVVPHSLPFKVVVISAILALVVLTVISLIILIMLWQKKPRYEIRWKVIESVSSDGHEYIYVDPVQLPYDSTWELPRDQLVLGRTLGSGAFGQVVEATAHGLSHSQATMKVAVKMLKSTARSSEKQALMSELKIMSHLGPHLNVVNLLGACTKGGPIYIITEYCRYGDLVDYLHRNKHTFLQRHSNKHCPPSAELYSNALPVGFSLPSHLNLTGESDGGYMDMSKDESIDYVPMLDMKGDIKYADIESPSYMAPYDNYVPSAPERTYRATLINDSPVLSYTDLVGFSYQVANGMDFLASKNCVHRDLAARNVLICEGKLVKICDFGLARDIMRDSNYISKGSTFLPLKWMAPESIFNSLYTTLSDVWSFGILLWEIFTLGGTPYPELPMNDQFYNAIKRGYRMAQPAHASDEIYEIMQKCWEEKFETRPPFSQLVLLLERLLGEGYKKKYQQVDEEFLRSDHPAILRSQARFPGIHSLRSPLDTSSVLYTAVQPNESDNDYIIPLPDPKPDVADEGLPEGSPSLASSTLNEVNTSSTISCDSPLELQEEPQQAEPEAQLEQPQDSGCPGPLAEAEDSFL</sequence>
<feature type="signal peptide">
    <location>
        <begin position="1"/>
        <end position="31"/>
    </location>
</feature>
<feature type="chain" id="PRO_0000016758" description="Platelet-derived growth factor receptor beta">
    <location>
        <begin position="32"/>
        <end position="1098"/>
    </location>
</feature>
<feature type="topological domain" description="Extracellular" evidence="3">
    <location>
        <begin position="32"/>
        <end position="531"/>
    </location>
</feature>
<feature type="transmembrane region" description="Helical" evidence="3">
    <location>
        <begin position="532"/>
        <end position="552"/>
    </location>
</feature>
<feature type="topological domain" description="Cytoplasmic" evidence="3">
    <location>
        <begin position="553"/>
        <end position="1098"/>
    </location>
</feature>
<feature type="domain" description="Ig-like C2-type 1">
    <location>
        <begin position="33"/>
        <end position="119"/>
    </location>
</feature>
<feature type="domain" description="Ig-like C2-type 2">
    <location>
        <begin position="128"/>
        <end position="209"/>
    </location>
</feature>
<feature type="domain" description="Ig-like C2-type 3">
    <location>
        <begin position="213"/>
        <end position="308"/>
    </location>
</feature>
<feature type="domain" description="Ig-like C2-type 4">
    <location>
        <begin position="330"/>
        <end position="402"/>
    </location>
</feature>
<feature type="domain" description="Ig-like C2-type 5">
    <location>
        <begin position="415"/>
        <end position="523"/>
    </location>
</feature>
<feature type="domain" description="Protein kinase" evidence="5">
    <location>
        <begin position="599"/>
        <end position="961"/>
    </location>
</feature>
<feature type="region of interest" description="Disordered" evidence="7">
    <location>
        <begin position="1016"/>
        <end position="1098"/>
    </location>
</feature>
<feature type="compositionally biased region" description="Polar residues" evidence="7">
    <location>
        <begin position="1042"/>
        <end position="1059"/>
    </location>
</feature>
<feature type="compositionally biased region" description="Low complexity" evidence="7">
    <location>
        <begin position="1062"/>
        <end position="1082"/>
    </location>
</feature>
<feature type="active site" description="Proton acceptor" evidence="5 6">
    <location>
        <position position="825"/>
    </location>
</feature>
<feature type="binding site" evidence="5">
    <location>
        <begin position="605"/>
        <end position="613"/>
    </location>
    <ligand>
        <name>ATP</name>
        <dbReference type="ChEBI" id="CHEBI:30616"/>
    </ligand>
</feature>
<feature type="binding site" evidence="5">
    <location>
        <position position="633"/>
    </location>
    <ligand>
        <name>ATP</name>
        <dbReference type="ChEBI" id="CHEBI:30616"/>
    </ligand>
</feature>
<feature type="modified residue" description="Phosphotyrosine; by autocatalysis" evidence="2">
    <location>
        <position position="561"/>
    </location>
</feature>
<feature type="modified residue" description="Phosphotyrosine; by autocatalysis" evidence="2">
    <location>
        <position position="578"/>
    </location>
</feature>
<feature type="modified residue" description="Phosphotyrosine; by autocatalysis" evidence="2">
    <location>
        <position position="580"/>
    </location>
</feature>
<feature type="modified residue" description="Phosphotyrosine; by ABL1 and ABL2" evidence="10">
    <location>
        <position position="685"/>
    </location>
</feature>
<feature type="modified residue" description="Phosphotyrosine; by autocatalysis" evidence="2">
    <location>
        <position position="715"/>
    </location>
</feature>
<feature type="modified residue" description="Phosphotyrosine; by autocatalysis" evidence="2">
    <location>
        <position position="739"/>
    </location>
</feature>
<feature type="modified residue" description="Phosphotyrosine; by autocatalysis" evidence="2">
    <location>
        <position position="750"/>
    </location>
</feature>
<feature type="modified residue" description="Phosphotyrosine; by autocatalysis" evidence="2">
    <location>
        <position position="762"/>
    </location>
</feature>
<feature type="modified residue" description="Phosphotyrosine; by autocatalysis" evidence="2">
    <location>
        <position position="770"/>
    </location>
</feature>
<feature type="modified residue" description="Phosphotyrosine; by autocatalysis" evidence="2">
    <location>
        <position position="774"/>
    </location>
</feature>
<feature type="modified residue" description="Phosphotyrosine; by autocatalysis" evidence="2">
    <location>
        <position position="777"/>
    </location>
</feature>
<feature type="modified residue" description="Phosphotyrosine; by autocatalysis" evidence="2">
    <location>
        <position position="856"/>
    </location>
</feature>
<feature type="modified residue" description="Phosphotyrosine; by ABL1 and ABL2" evidence="10">
    <location>
        <position position="933"/>
    </location>
</feature>
<feature type="modified residue" description="Phosphotyrosine; by ABL1 and ABL2" evidence="10">
    <location>
        <position position="969"/>
    </location>
</feature>
<feature type="modified residue" description="Phosphotyrosine; by autocatalysis" evidence="2">
    <location>
        <position position="1008"/>
    </location>
</feature>
<feature type="modified residue" description="Phosphotyrosine; by autocatalysis" evidence="2">
    <location>
        <position position="1020"/>
    </location>
</feature>
<feature type="glycosylation site" description="N-linked (GlcNAc...) asparagine" evidence="3">
    <location>
        <position position="44"/>
    </location>
</feature>
<feature type="glycosylation site" description="N-linked (GlcNAc...) asparagine" evidence="3">
    <location>
        <position position="88"/>
    </location>
</feature>
<feature type="glycosylation site" description="N-linked (GlcNAc...) asparagine" evidence="3">
    <location>
        <position position="102"/>
    </location>
</feature>
<feature type="glycosylation site" description="N-linked (GlcNAc...) asparagine" evidence="3">
    <location>
        <position position="214"/>
    </location>
</feature>
<feature type="glycosylation site" description="N-linked (GlcNAc...) asparagine" evidence="3">
    <location>
        <position position="291"/>
    </location>
</feature>
<feature type="glycosylation site" description="N-linked (GlcNAc...) asparagine" evidence="18">
    <location>
        <position position="306"/>
    </location>
</feature>
<feature type="glycosylation site" description="N-linked (GlcNAc...) asparagine" evidence="3">
    <location>
        <position position="353"/>
    </location>
</feature>
<feature type="glycosylation site" description="N-linked (GlcNAc...) asparagine" evidence="3">
    <location>
        <position position="370"/>
    </location>
</feature>
<feature type="glycosylation site" description="N-linked (GlcNAc...) asparagine" evidence="3">
    <location>
        <position position="444"/>
    </location>
</feature>
<feature type="glycosylation site" description="N-linked (GlcNAc...) asparagine" evidence="18">
    <location>
        <position position="467"/>
    </location>
</feature>
<feature type="glycosylation site" description="N-linked (GlcNAc...) asparagine" evidence="18">
    <location>
        <position position="478"/>
    </location>
</feature>
<feature type="disulfide bond" evidence="4">
    <location>
        <begin position="53"/>
        <end position="99"/>
    </location>
</feature>
<feature type="disulfide bond" evidence="4">
    <location>
        <begin position="148"/>
        <end position="189"/>
    </location>
</feature>
<feature type="disulfide bond" evidence="4">
    <location>
        <begin position="234"/>
        <end position="290"/>
    </location>
</feature>
<feature type="disulfide bond" evidence="4">
    <location>
        <begin position="435"/>
        <end position="507"/>
    </location>
</feature>
<feature type="splice variant" id="VSP_060195" description="In isoform 2.">
    <original>K</original>
    <variation>KS</variation>
    <location>
        <position position="454"/>
    </location>
</feature>
<feature type="mutagenesis site" description="Strongly reduced levels of vascular smooth muscle cells and pericytes in developing blood vessels; when associated with F-715; F-739; F-750; F-770; F-1008 and F-1020." evidence="9">
    <original>Y</original>
    <variation>F</variation>
    <location>
        <position position="578"/>
    </location>
</feature>
<feature type="mutagenesis site" description="Strongly reduced levels of vascular smooth muscle cells and pericytes in developing blood vessels; when associated with F-578; F-739; F-750; F-770; F-1008 and F-1020." evidence="9">
    <original>Y</original>
    <variation>F</variation>
    <location>
        <position position="715"/>
    </location>
</feature>
<feature type="mutagenesis site" description="Strongly reduced levels of vascular smooth muscle cells and pericytes in developing blood vessels; when associated with F-578; F-715; F-750; F-770; F-1008 and F-1020." evidence="9">
    <original>Y</original>
    <variation>F</variation>
    <location>
        <position position="739"/>
    </location>
</feature>
<feature type="mutagenesis site" description="Strongly reduced levels of vascular smooth muscle cells and pericytes in developing blood vessels; when associated with F-578; F-715; F-739; F-770; F-1008 and F-1020." evidence="9">
    <original>Y</original>
    <variation>F</variation>
    <location>
        <position position="750"/>
    </location>
</feature>
<feature type="mutagenesis site" description="Strongly reduced levels of vascular smooth muscle cells and pericytes in developing blood vessels; when associated with F-578; F-715; F-739; F-750; F-1008 and F-1020." evidence="9">
    <original>Y</original>
    <variation>F</variation>
    <location>
        <position position="770"/>
    </location>
</feature>
<feature type="mutagenesis site" description="Increased autophosphorylation in the absence of PDGFB binding. Increased autophosphorylation in response to PDGFB binding. Constitutive interaction with PIK3R1, and constitutive AKT1 activation." evidence="12">
    <original>D</original>
    <variation>N</variation>
    <location>
        <position position="849"/>
    </location>
</feature>
<feature type="mutagenesis site" description="Strongly reduced levels of vascular smooth muscle cells and pericytes in developing blood vessels; when associated with F-578; F-715; F-739; F-750; F-770 and F-1020." evidence="9">
    <original>Y</original>
    <variation>F</variation>
    <location>
        <position position="1008"/>
    </location>
</feature>
<feature type="mutagenesis site" description="Strongly reduced levels of vascular smooth muscle cells and pericytes in developing blood vessels; when associated with F-578; F-715; F-739; F-750; F-770 and F-1008." evidence="9">
    <original>Y</original>
    <variation>F</variation>
    <location>
        <position position="1020"/>
    </location>
</feature>
<feature type="sequence conflict" description="In Ref. 1; CAA27882." evidence="23" ref="1">
    <original>F</original>
    <variation>Y</variation>
    <location>
        <position position="863"/>
    </location>
</feature>
<dbReference type="EC" id="2.7.10.1"/>
<dbReference type="EMBL" id="X04367">
    <property type="protein sequence ID" value="CAA27882.1"/>
    <property type="molecule type" value="mRNA"/>
</dbReference>
<dbReference type="EMBL" id="AC124448">
    <property type="status" value="NOT_ANNOTATED_CDS"/>
    <property type="molecule type" value="Genomic_DNA"/>
</dbReference>
<dbReference type="CCDS" id="CCDS50300.1">
    <molecule id="P05622-2"/>
</dbReference>
<dbReference type="PIR" id="A25742">
    <property type="entry name" value="PFMSRB"/>
</dbReference>
<dbReference type="RefSeq" id="NP_001139740.1">
    <molecule id="P05622-2"/>
    <property type="nucleotide sequence ID" value="NM_001146268.1"/>
</dbReference>
<dbReference type="RefSeq" id="NP_032835.2">
    <molecule id="P05622-1"/>
    <property type="nucleotide sequence ID" value="NM_008809.2"/>
</dbReference>
<dbReference type="PDB" id="1AYA">
    <property type="method" value="X-ray"/>
    <property type="resolution" value="2.05 A"/>
    <property type="chains" value="P/Q=1005-1015"/>
</dbReference>
<dbReference type="PDB" id="1AYC">
    <property type="method" value="X-ray"/>
    <property type="resolution" value="2.30 A"/>
    <property type="chains" value="P=736-744"/>
</dbReference>
<dbReference type="PDBsum" id="1AYA"/>
<dbReference type="PDBsum" id="1AYC"/>
<dbReference type="BMRB" id="P05622"/>
<dbReference type="SMR" id="P05622"/>
<dbReference type="BioGRID" id="202089">
    <property type="interactions" value="15"/>
</dbReference>
<dbReference type="ComplexPortal" id="CPX-2903">
    <property type="entry name" value="PDGF receptor alpha-beta - PDGF-AB complex"/>
</dbReference>
<dbReference type="ComplexPortal" id="CPX-2904">
    <property type="entry name" value="PDGF receptor beta - PDGF-AB complex"/>
</dbReference>
<dbReference type="ComplexPortal" id="CPX-2907">
    <property type="entry name" value="PDGF receptor alpha-beta - PDGF-BB complex"/>
</dbReference>
<dbReference type="ComplexPortal" id="CPX-2908">
    <property type="entry name" value="PDGF receptor beta - PDGF-BB complex"/>
</dbReference>
<dbReference type="ComplexPortal" id="CPX-2913">
    <property type="entry name" value="PDGF receptor alpha-beta - PDGF-CC complex"/>
</dbReference>
<dbReference type="ComplexPortal" id="CPX-2914">
    <property type="entry name" value="PDGF receptor beta - PDGF-CC complex"/>
</dbReference>
<dbReference type="ComplexPortal" id="CPX-2916">
    <property type="entry name" value="PDGF receptor alpha-beta - PDGF-DD complex"/>
</dbReference>
<dbReference type="ComplexPortal" id="CPX-2917">
    <property type="entry name" value="PDGF receptor beta - PDGF-DD complex"/>
</dbReference>
<dbReference type="CORUM" id="P05622"/>
<dbReference type="DIP" id="DIP-39669N"/>
<dbReference type="FunCoup" id="P05622">
    <property type="interactions" value="1657"/>
</dbReference>
<dbReference type="IntAct" id="P05622">
    <property type="interactions" value="14"/>
</dbReference>
<dbReference type="MINT" id="P05622"/>
<dbReference type="STRING" id="10090.ENSMUSP00000025522"/>
<dbReference type="BindingDB" id="P05622"/>
<dbReference type="ChEMBL" id="CHEMBL2749"/>
<dbReference type="DrugCentral" id="P05622"/>
<dbReference type="GuidetoPHARMACOLOGY" id="1804"/>
<dbReference type="GlyCosmos" id="P05622">
    <property type="glycosylation" value="11 sites, No reported glycans"/>
</dbReference>
<dbReference type="GlyGen" id="P05622">
    <property type="glycosylation" value="13 sites, 4 N-linked glycans (6 sites), 1 O-linked glycan (1 site)"/>
</dbReference>
<dbReference type="iPTMnet" id="P05622"/>
<dbReference type="PhosphoSitePlus" id="P05622"/>
<dbReference type="jPOST" id="P05622"/>
<dbReference type="PaxDb" id="10090-ENSMUSP00000025522"/>
<dbReference type="ProteomicsDB" id="288051">
    <molecule id="P05622-1"/>
</dbReference>
<dbReference type="ProteomicsDB" id="311896"/>
<dbReference type="Pumba" id="P05622"/>
<dbReference type="ABCD" id="P05622">
    <property type="antibodies" value="6 sequenced antibodies"/>
</dbReference>
<dbReference type="Antibodypedia" id="3424">
    <property type="antibodies" value="2237 antibodies from 48 providers"/>
</dbReference>
<dbReference type="DNASU" id="18596"/>
<dbReference type="Ensembl" id="ENSMUST00000025522.11">
    <molecule id="P05622-2"/>
    <property type="protein sequence ID" value="ENSMUSP00000025522.5"/>
    <property type="gene ID" value="ENSMUSG00000024620.13"/>
</dbReference>
<dbReference type="Ensembl" id="ENSMUST00000249931.1">
    <molecule id="P05622-1"/>
    <property type="protein sequence ID" value="ENSMUSP00000160025.1"/>
    <property type="gene ID" value="ENSMUSG00000024620.13"/>
</dbReference>
<dbReference type="GeneID" id="18596"/>
<dbReference type="KEGG" id="mmu:18596"/>
<dbReference type="UCSC" id="uc008fbk.2">
    <molecule id="P05622-1"/>
    <property type="organism name" value="mouse"/>
</dbReference>
<dbReference type="AGR" id="MGI:97531"/>
<dbReference type="CTD" id="5159"/>
<dbReference type="MGI" id="MGI:97531">
    <property type="gene designation" value="Pdgfrb"/>
</dbReference>
<dbReference type="VEuPathDB" id="HostDB:ENSMUSG00000024620"/>
<dbReference type="eggNOG" id="KOG0200">
    <property type="taxonomic scope" value="Eukaryota"/>
</dbReference>
<dbReference type="GeneTree" id="ENSGT00940000157138"/>
<dbReference type="HOGENOM" id="CLU_000288_49_0_1"/>
<dbReference type="InParanoid" id="P05622"/>
<dbReference type="OMA" id="WPEDQEF"/>
<dbReference type="OrthoDB" id="51897at9989"/>
<dbReference type="PhylomeDB" id="P05622"/>
<dbReference type="TreeFam" id="TF325768"/>
<dbReference type="BRENDA" id="2.7.10.1">
    <property type="organism ID" value="3474"/>
</dbReference>
<dbReference type="Reactome" id="R-MMU-1257604">
    <property type="pathway name" value="PIP3 activates AKT signaling"/>
</dbReference>
<dbReference type="Reactome" id="R-MMU-186763">
    <property type="pathway name" value="Downstream signal transduction"/>
</dbReference>
<dbReference type="Reactome" id="R-MMU-186797">
    <property type="pathway name" value="Signaling by PDGF"/>
</dbReference>
<dbReference type="Reactome" id="R-MMU-5673001">
    <property type="pathway name" value="RAF/MAP kinase cascade"/>
</dbReference>
<dbReference type="Reactome" id="R-MMU-6811558">
    <property type="pathway name" value="PI5P, PP2A and IER3 Regulate PI3K/AKT Signaling"/>
</dbReference>
<dbReference type="BioGRID-ORCS" id="18596">
    <property type="hits" value="5 hits in 81 CRISPR screens"/>
</dbReference>
<dbReference type="EvolutionaryTrace" id="P05622"/>
<dbReference type="PRO" id="PR:P05622"/>
<dbReference type="Proteomes" id="UP000000589">
    <property type="component" value="Chromosome 18"/>
</dbReference>
<dbReference type="RNAct" id="P05622">
    <property type="molecule type" value="protein"/>
</dbReference>
<dbReference type="Bgee" id="ENSMUSG00000024620">
    <property type="expression patterns" value="Expressed in external carotid artery and 267 other cell types or tissues"/>
</dbReference>
<dbReference type="ExpressionAtlas" id="P05622">
    <property type="expression patterns" value="baseline and differential"/>
</dbReference>
<dbReference type="GO" id="GO:0016324">
    <property type="term" value="C:apical plasma membrane"/>
    <property type="evidence" value="ECO:0000250"/>
    <property type="project" value="UniProtKB"/>
</dbReference>
<dbReference type="GO" id="GO:0009986">
    <property type="term" value="C:cell surface"/>
    <property type="evidence" value="ECO:0000314"/>
    <property type="project" value="MGI"/>
</dbReference>
<dbReference type="GO" id="GO:0005737">
    <property type="term" value="C:cytoplasm"/>
    <property type="evidence" value="ECO:0000314"/>
    <property type="project" value="MGI"/>
</dbReference>
<dbReference type="GO" id="GO:0031410">
    <property type="term" value="C:cytoplasmic vesicle"/>
    <property type="evidence" value="ECO:0007669"/>
    <property type="project" value="UniProtKB-KW"/>
</dbReference>
<dbReference type="GO" id="GO:0043202">
    <property type="term" value="C:lysosomal lumen"/>
    <property type="evidence" value="ECO:0007669"/>
    <property type="project" value="UniProtKB-SubCell"/>
</dbReference>
<dbReference type="GO" id="GO:0005634">
    <property type="term" value="C:nucleus"/>
    <property type="evidence" value="ECO:0000250"/>
    <property type="project" value="UniProtKB"/>
</dbReference>
<dbReference type="GO" id="GO:0005886">
    <property type="term" value="C:plasma membrane"/>
    <property type="evidence" value="ECO:0000250"/>
    <property type="project" value="UniProtKB"/>
</dbReference>
<dbReference type="GO" id="GO:0001726">
    <property type="term" value="C:ruffle"/>
    <property type="evidence" value="ECO:0000314"/>
    <property type="project" value="MGI"/>
</dbReference>
<dbReference type="GO" id="GO:0005524">
    <property type="term" value="F:ATP binding"/>
    <property type="evidence" value="ECO:0007669"/>
    <property type="project" value="UniProtKB-KW"/>
</dbReference>
<dbReference type="GO" id="GO:0016301">
    <property type="term" value="F:kinase activity"/>
    <property type="evidence" value="ECO:0000315"/>
    <property type="project" value="MGI"/>
</dbReference>
<dbReference type="GO" id="GO:0005019">
    <property type="term" value="F:platelet-derived growth factor beta-receptor activity"/>
    <property type="evidence" value="ECO:0000250"/>
    <property type="project" value="UniProtKB"/>
</dbReference>
<dbReference type="GO" id="GO:0048407">
    <property type="term" value="F:platelet-derived growth factor binding"/>
    <property type="evidence" value="ECO:0000304"/>
    <property type="project" value="DFLAT"/>
</dbReference>
<dbReference type="GO" id="GO:0005017">
    <property type="term" value="F:platelet-derived growth factor receptor activity"/>
    <property type="evidence" value="ECO:0000314"/>
    <property type="project" value="MGI"/>
</dbReference>
<dbReference type="GO" id="GO:0004713">
    <property type="term" value="F:protein tyrosine kinase activity"/>
    <property type="evidence" value="ECO:0000250"/>
    <property type="project" value="UniProtKB"/>
</dbReference>
<dbReference type="GO" id="GO:0005102">
    <property type="term" value="F:signaling receptor binding"/>
    <property type="evidence" value="ECO:0000353"/>
    <property type="project" value="UniProtKB"/>
</dbReference>
<dbReference type="GO" id="GO:0030325">
    <property type="term" value="P:adrenal gland development"/>
    <property type="evidence" value="ECO:0000316"/>
    <property type="project" value="MGI"/>
</dbReference>
<dbReference type="GO" id="GO:0035909">
    <property type="term" value="P:aorta morphogenesis"/>
    <property type="evidence" value="ECO:0000316"/>
    <property type="project" value="BHF-UCL"/>
</dbReference>
<dbReference type="GO" id="GO:0001568">
    <property type="term" value="P:blood vessel development"/>
    <property type="evidence" value="ECO:0000270"/>
    <property type="project" value="UniProtKB"/>
</dbReference>
<dbReference type="GO" id="GO:0055003">
    <property type="term" value="P:cardiac myofibril assembly"/>
    <property type="evidence" value="ECO:0000316"/>
    <property type="project" value="UniProtKB"/>
</dbReference>
<dbReference type="GO" id="GO:0060947">
    <property type="term" value="P:cardiac vascular smooth muscle cell differentiation"/>
    <property type="evidence" value="ECO:0000304"/>
    <property type="project" value="DFLAT"/>
</dbReference>
<dbReference type="GO" id="GO:0060326">
    <property type="term" value="P:cell chemotaxis"/>
    <property type="evidence" value="ECO:0000250"/>
    <property type="project" value="UniProtKB"/>
</dbReference>
<dbReference type="GO" id="GO:0060981">
    <property type="term" value="P:cell migration involved in coronary angiogenesis"/>
    <property type="evidence" value="ECO:0000315"/>
    <property type="project" value="UniProtKB"/>
</dbReference>
<dbReference type="GO" id="GO:0035441">
    <property type="term" value="P:cell migration involved in vasculogenesis"/>
    <property type="evidence" value="ECO:0000315"/>
    <property type="project" value="UniProtKB"/>
</dbReference>
<dbReference type="GO" id="GO:0070301">
    <property type="term" value="P:cellular response to hydrogen peroxide"/>
    <property type="evidence" value="ECO:0000315"/>
    <property type="project" value="MGI"/>
</dbReference>
<dbReference type="GO" id="GO:0048568">
    <property type="term" value="P:embryonic organ development"/>
    <property type="evidence" value="ECO:0000270"/>
    <property type="project" value="UniProtKB"/>
</dbReference>
<dbReference type="GO" id="GO:0001701">
    <property type="term" value="P:in utero embryonic development"/>
    <property type="evidence" value="ECO:0000315"/>
    <property type="project" value="MGI"/>
</dbReference>
<dbReference type="GO" id="GO:0001822">
    <property type="term" value="P:kidney development"/>
    <property type="evidence" value="ECO:0000315"/>
    <property type="project" value="MGI"/>
</dbReference>
<dbReference type="GO" id="GO:0072277">
    <property type="term" value="P:metanephric glomerular capillary formation"/>
    <property type="evidence" value="ECO:0000316"/>
    <property type="project" value="UniProtKB"/>
</dbReference>
<dbReference type="GO" id="GO:0072262">
    <property type="term" value="P:metanephric glomerular mesangial cell proliferation involved in metanephros development"/>
    <property type="evidence" value="ECO:0000315"/>
    <property type="project" value="UniProtKB"/>
</dbReference>
<dbReference type="GO" id="GO:0072223">
    <property type="term" value="P:metanephric glomerular mesangium development"/>
    <property type="evidence" value="ECO:0000270"/>
    <property type="project" value="UniProtKB"/>
</dbReference>
<dbReference type="GO" id="GO:0018108">
    <property type="term" value="P:peptidyl-tyrosine phosphorylation"/>
    <property type="evidence" value="ECO:0000314"/>
    <property type="project" value="UniProtKB"/>
</dbReference>
<dbReference type="GO" id="GO:0048008">
    <property type="term" value="P:platelet-derived growth factor receptor signaling pathway"/>
    <property type="evidence" value="ECO:0000315"/>
    <property type="project" value="MGI"/>
</dbReference>
<dbReference type="GO" id="GO:0090280">
    <property type="term" value="P:positive regulation of calcium ion import"/>
    <property type="evidence" value="ECO:0000315"/>
    <property type="project" value="UniProtKB"/>
</dbReference>
<dbReference type="GO" id="GO:0030335">
    <property type="term" value="P:positive regulation of cell migration"/>
    <property type="evidence" value="ECO:0000250"/>
    <property type="project" value="UniProtKB"/>
</dbReference>
<dbReference type="GO" id="GO:0038091">
    <property type="term" value="P:positive regulation of cell proliferation by VEGF-activated platelet derived growth factor receptor signaling pathway"/>
    <property type="evidence" value="ECO:0000250"/>
    <property type="project" value="UniProtKB"/>
</dbReference>
<dbReference type="GO" id="GO:0050921">
    <property type="term" value="P:positive regulation of chemotaxis"/>
    <property type="evidence" value="ECO:0000314"/>
    <property type="project" value="UniProtKB"/>
</dbReference>
<dbReference type="GO" id="GO:2000573">
    <property type="term" value="P:positive regulation of DNA biosynthetic process"/>
    <property type="evidence" value="ECO:0000315"/>
    <property type="project" value="UniProtKB"/>
</dbReference>
<dbReference type="GO" id="GO:0070374">
    <property type="term" value="P:positive regulation of ERK1 and ERK2 cascade"/>
    <property type="evidence" value="ECO:0000314"/>
    <property type="project" value="UniProtKB"/>
</dbReference>
<dbReference type="GO" id="GO:0043406">
    <property type="term" value="P:positive regulation of MAP kinase activity"/>
    <property type="evidence" value="ECO:0000314"/>
    <property type="project" value="UniProtKB"/>
</dbReference>
<dbReference type="GO" id="GO:0035793">
    <property type="term" value="P:positive regulation of metanephric mesenchymal cell migration by platelet-derived growth factor receptor-beta signaling pathway"/>
    <property type="evidence" value="ECO:0000315"/>
    <property type="project" value="UniProtKB"/>
</dbReference>
<dbReference type="GO" id="GO:0045840">
    <property type="term" value="P:positive regulation of mitotic nuclear division"/>
    <property type="evidence" value="ECO:0000314"/>
    <property type="project" value="UniProtKB"/>
</dbReference>
<dbReference type="GO" id="GO:0051897">
    <property type="term" value="P:positive regulation of phosphatidylinositol 3-kinase/protein kinase B signal transduction"/>
    <property type="evidence" value="ECO:0000314"/>
    <property type="project" value="UniProtKB"/>
</dbReference>
<dbReference type="GO" id="GO:2000379">
    <property type="term" value="P:positive regulation of reactive oxygen species metabolic process"/>
    <property type="evidence" value="ECO:0000315"/>
    <property type="project" value="UniProtKB"/>
</dbReference>
<dbReference type="GO" id="GO:0014911">
    <property type="term" value="P:positive regulation of smooth muscle cell migration"/>
    <property type="evidence" value="ECO:0000315"/>
    <property type="project" value="UniProtKB"/>
</dbReference>
<dbReference type="GO" id="GO:0048661">
    <property type="term" value="P:positive regulation of smooth muscle cell proliferation"/>
    <property type="evidence" value="ECO:0000315"/>
    <property type="project" value="UniProtKB"/>
</dbReference>
<dbReference type="GO" id="GO:0046777">
    <property type="term" value="P:protein autophosphorylation"/>
    <property type="evidence" value="ECO:0000314"/>
    <property type="project" value="UniProtKB"/>
</dbReference>
<dbReference type="GO" id="GO:0032956">
    <property type="term" value="P:regulation of actin cytoskeleton organization"/>
    <property type="evidence" value="ECO:0000316"/>
    <property type="project" value="BHF-UCL"/>
</dbReference>
<dbReference type="GO" id="GO:0106096">
    <property type="term" value="P:response to ceramide"/>
    <property type="evidence" value="ECO:0000315"/>
    <property type="project" value="MGI"/>
</dbReference>
<dbReference type="GO" id="GO:0061298">
    <property type="term" value="P:retina vasculature development in camera-type eye"/>
    <property type="evidence" value="ECO:0000315"/>
    <property type="project" value="UniProtKB"/>
</dbReference>
<dbReference type="GO" id="GO:0097178">
    <property type="term" value="P:ruffle assembly"/>
    <property type="evidence" value="ECO:0000314"/>
    <property type="project" value="MGI"/>
</dbReference>
<dbReference type="GO" id="GO:0007165">
    <property type="term" value="P:signal transduction"/>
    <property type="evidence" value="ECO:0000314"/>
    <property type="project" value="MGI"/>
</dbReference>
<dbReference type="GO" id="GO:0048705">
    <property type="term" value="P:skeletal system morphogenesis"/>
    <property type="evidence" value="ECO:0000315"/>
    <property type="project" value="MGI"/>
</dbReference>
<dbReference type="GO" id="GO:0071670">
    <property type="term" value="P:smooth muscle cell chemotaxis"/>
    <property type="evidence" value="ECO:0000316"/>
    <property type="project" value="BHF-UCL"/>
</dbReference>
<dbReference type="GO" id="GO:0048745">
    <property type="term" value="P:smooth muscle tissue development"/>
    <property type="evidence" value="ECO:0000315"/>
    <property type="project" value="MGI"/>
</dbReference>
<dbReference type="GO" id="GO:0001894">
    <property type="term" value="P:tissue homeostasis"/>
    <property type="evidence" value="ECO:0000315"/>
    <property type="project" value="MGI"/>
</dbReference>
<dbReference type="CDD" id="cd00096">
    <property type="entry name" value="Ig"/>
    <property type="match status" value="1"/>
</dbReference>
<dbReference type="FunFam" id="3.30.200.20:FF:000025">
    <property type="entry name" value="Platelet-derived growth factor receptor alpha"/>
    <property type="match status" value="1"/>
</dbReference>
<dbReference type="FunFam" id="1.10.510.10:FF:000140">
    <property type="entry name" value="Platelet-derived growth factor receptor beta"/>
    <property type="match status" value="1"/>
</dbReference>
<dbReference type="FunFam" id="2.60.40.10:FF:000223">
    <property type="entry name" value="Platelet-derived growth factor receptor beta"/>
    <property type="match status" value="1"/>
</dbReference>
<dbReference type="FunFam" id="2.60.40.10:FF:000572">
    <property type="entry name" value="Platelet-derived growth factor receptor beta"/>
    <property type="match status" value="1"/>
</dbReference>
<dbReference type="FunFam" id="2.60.40.10:FF:000715">
    <property type="entry name" value="Platelet-derived growth factor receptor beta"/>
    <property type="match status" value="1"/>
</dbReference>
<dbReference type="FunFam" id="2.60.40.10:FF:000814">
    <property type="entry name" value="Platelet-derived growth factor receptor beta"/>
    <property type="match status" value="1"/>
</dbReference>
<dbReference type="FunFam" id="2.60.40.10:FF:000982">
    <property type="entry name" value="Platelet-derived growth factor receptor beta"/>
    <property type="match status" value="1"/>
</dbReference>
<dbReference type="Gene3D" id="2.60.40.10">
    <property type="entry name" value="Immunoglobulins"/>
    <property type="match status" value="5"/>
</dbReference>
<dbReference type="Gene3D" id="3.30.200.20">
    <property type="entry name" value="Phosphorylase Kinase, domain 1"/>
    <property type="match status" value="1"/>
</dbReference>
<dbReference type="Gene3D" id="1.10.510.10">
    <property type="entry name" value="Transferase(Phosphotransferase) domain 1"/>
    <property type="match status" value="1"/>
</dbReference>
<dbReference type="InterPro" id="IPR007110">
    <property type="entry name" value="Ig-like_dom"/>
</dbReference>
<dbReference type="InterPro" id="IPR036179">
    <property type="entry name" value="Ig-like_dom_sf"/>
</dbReference>
<dbReference type="InterPro" id="IPR013783">
    <property type="entry name" value="Ig-like_fold"/>
</dbReference>
<dbReference type="InterPro" id="IPR003599">
    <property type="entry name" value="Ig_sub"/>
</dbReference>
<dbReference type="InterPro" id="IPR003598">
    <property type="entry name" value="Ig_sub2"/>
</dbReference>
<dbReference type="InterPro" id="IPR013151">
    <property type="entry name" value="Immunoglobulin_dom"/>
</dbReference>
<dbReference type="InterPro" id="IPR011009">
    <property type="entry name" value="Kinase-like_dom_sf"/>
</dbReference>
<dbReference type="InterPro" id="IPR027288">
    <property type="entry name" value="PGFRB"/>
</dbReference>
<dbReference type="InterPro" id="IPR000719">
    <property type="entry name" value="Prot_kinase_dom"/>
</dbReference>
<dbReference type="InterPro" id="IPR017441">
    <property type="entry name" value="Protein_kinase_ATP_BS"/>
</dbReference>
<dbReference type="InterPro" id="IPR050122">
    <property type="entry name" value="RTK"/>
</dbReference>
<dbReference type="InterPro" id="IPR001245">
    <property type="entry name" value="Ser-Thr/Tyr_kinase_cat_dom"/>
</dbReference>
<dbReference type="InterPro" id="IPR008266">
    <property type="entry name" value="Tyr_kinase_AS"/>
</dbReference>
<dbReference type="InterPro" id="IPR020635">
    <property type="entry name" value="Tyr_kinase_cat_dom"/>
</dbReference>
<dbReference type="InterPro" id="IPR001824">
    <property type="entry name" value="Tyr_kinase_rcpt_3_CS"/>
</dbReference>
<dbReference type="PANTHER" id="PTHR24416:SF53">
    <property type="entry name" value="PLATELET-DERIVED GROWTH FACTOR RECEPTOR BETA"/>
    <property type="match status" value="1"/>
</dbReference>
<dbReference type="PANTHER" id="PTHR24416">
    <property type="entry name" value="TYROSINE-PROTEIN KINASE RECEPTOR"/>
    <property type="match status" value="1"/>
</dbReference>
<dbReference type="Pfam" id="PF00047">
    <property type="entry name" value="ig"/>
    <property type="match status" value="1"/>
</dbReference>
<dbReference type="Pfam" id="PF13927">
    <property type="entry name" value="Ig_3"/>
    <property type="match status" value="1"/>
</dbReference>
<dbReference type="Pfam" id="PF25305">
    <property type="entry name" value="Ig_PDGFR_d4"/>
    <property type="match status" value="1"/>
</dbReference>
<dbReference type="Pfam" id="PF07714">
    <property type="entry name" value="PK_Tyr_Ser-Thr"/>
    <property type="match status" value="1"/>
</dbReference>
<dbReference type="PIRSF" id="PIRSF500948">
    <property type="entry name" value="Beta-PDGF_receptor"/>
    <property type="match status" value="1"/>
</dbReference>
<dbReference type="PIRSF" id="PIRSF000615">
    <property type="entry name" value="TyrPK_CSF1-R"/>
    <property type="match status" value="1"/>
</dbReference>
<dbReference type="PRINTS" id="PR01832">
    <property type="entry name" value="VEGFRECEPTOR"/>
</dbReference>
<dbReference type="SMART" id="SM00409">
    <property type="entry name" value="IG"/>
    <property type="match status" value="3"/>
</dbReference>
<dbReference type="SMART" id="SM00408">
    <property type="entry name" value="IGc2"/>
    <property type="match status" value="3"/>
</dbReference>
<dbReference type="SMART" id="SM00219">
    <property type="entry name" value="TyrKc"/>
    <property type="match status" value="1"/>
</dbReference>
<dbReference type="SUPFAM" id="SSF48726">
    <property type="entry name" value="Immunoglobulin"/>
    <property type="match status" value="4"/>
</dbReference>
<dbReference type="SUPFAM" id="SSF56112">
    <property type="entry name" value="Protein kinase-like (PK-like)"/>
    <property type="match status" value="1"/>
</dbReference>
<dbReference type="PROSITE" id="PS50835">
    <property type="entry name" value="IG_LIKE"/>
    <property type="match status" value="3"/>
</dbReference>
<dbReference type="PROSITE" id="PS00107">
    <property type="entry name" value="PROTEIN_KINASE_ATP"/>
    <property type="match status" value="1"/>
</dbReference>
<dbReference type="PROSITE" id="PS50011">
    <property type="entry name" value="PROTEIN_KINASE_DOM"/>
    <property type="match status" value="1"/>
</dbReference>
<dbReference type="PROSITE" id="PS00109">
    <property type="entry name" value="PROTEIN_KINASE_TYR"/>
    <property type="match status" value="1"/>
</dbReference>
<dbReference type="PROSITE" id="PS00240">
    <property type="entry name" value="RECEPTOR_TYR_KIN_III"/>
    <property type="match status" value="1"/>
</dbReference>